<comment type="function">
    <text evidence="2 3 4">Could be a mediator in iron transactions between iron acquisition and iron-requiring processes, such as synthesis and/or repair of Fe-S clusters in biosynthetic enzymes. Necessary to maintain high levels of aconitase under oxidative stress.</text>
</comment>
<comment type="similarity">
    <text evidence="5">Belongs to the Fe(2+)-trafficking protein family.</text>
</comment>
<dbReference type="EMBL" id="AE006468">
    <property type="protein sequence ID" value="AAL21986.1"/>
    <property type="molecule type" value="Genomic_DNA"/>
</dbReference>
<dbReference type="RefSeq" id="NP_462027.1">
    <property type="nucleotide sequence ID" value="NC_003197.2"/>
</dbReference>
<dbReference type="RefSeq" id="WP_000091706.1">
    <property type="nucleotide sequence ID" value="NC_003197.2"/>
</dbReference>
<dbReference type="PDB" id="1XS8">
    <property type="method" value="NMR"/>
    <property type="chains" value="A=1-91"/>
</dbReference>
<dbReference type="PDBsum" id="1XS8"/>
<dbReference type="SMR" id="P67617"/>
<dbReference type="STRING" id="99287.STM3111"/>
<dbReference type="PaxDb" id="99287-STM3111"/>
<dbReference type="GeneID" id="1254634"/>
<dbReference type="KEGG" id="stm:STM3111"/>
<dbReference type="PATRIC" id="fig|99287.12.peg.3297"/>
<dbReference type="HOGENOM" id="CLU_170994_0_0_6"/>
<dbReference type="OMA" id="NCIKLGR"/>
<dbReference type="PhylomeDB" id="P67617"/>
<dbReference type="BioCyc" id="SENT99287:STM3111-MONOMER"/>
<dbReference type="EvolutionaryTrace" id="P67617"/>
<dbReference type="Proteomes" id="UP000001014">
    <property type="component" value="Chromosome"/>
</dbReference>
<dbReference type="GO" id="GO:0005829">
    <property type="term" value="C:cytosol"/>
    <property type="evidence" value="ECO:0000318"/>
    <property type="project" value="GO_Central"/>
</dbReference>
<dbReference type="GO" id="GO:0005506">
    <property type="term" value="F:iron ion binding"/>
    <property type="evidence" value="ECO:0007669"/>
    <property type="project" value="UniProtKB-UniRule"/>
</dbReference>
<dbReference type="GO" id="GO:0034599">
    <property type="term" value="P:cellular response to oxidative stress"/>
    <property type="evidence" value="ECO:0000318"/>
    <property type="project" value="GO_Central"/>
</dbReference>
<dbReference type="FunFam" id="1.10.3880.10:FF:000001">
    <property type="entry name" value="Probable Fe(2+)-trafficking protein"/>
    <property type="match status" value="1"/>
</dbReference>
<dbReference type="Gene3D" id="1.10.3880.10">
    <property type="entry name" value="Fe(II) trafficking protein YggX"/>
    <property type="match status" value="1"/>
</dbReference>
<dbReference type="HAMAP" id="MF_00686">
    <property type="entry name" value="Fe_traffic_YggX"/>
    <property type="match status" value="1"/>
</dbReference>
<dbReference type="InterPro" id="IPR007457">
    <property type="entry name" value="Fe_traffick_prot_YggX"/>
</dbReference>
<dbReference type="InterPro" id="IPR036766">
    <property type="entry name" value="Fe_traffick_prot_YggX_sf"/>
</dbReference>
<dbReference type="NCBIfam" id="NF003817">
    <property type="entry name" value="PRK05408.1"/>
    <property type="match status" value="1"/>
</dbReference>
<dbReference type="PANTHER" id="PTHR36965">
    <property type="entry name" value="FE(2+)-TRAFFICKING PROTEIN-RELATED"/>
    <property type="match status" value="1"/>
</dbReference>
<dbReference type="PANTHER" id="PTHR36965:SF1">
    <property type="entry name" value="FE(2+)-TRAFFICKING PROTEIN-RELATED"/>
    <property type="match status" value="1"/>
</dbReference>
<dbReference type="Pfam" id="PF04362">
    <property type="entry name" value="Iron_traffic"/>
    <property type="match status" value="1"/>
</dbReference>
<dbReference type="PIRSF" id="PIRSF029827">
    <property type="entry name" value="Fe_traffic_YggX"/>
    <property type="match status" value="1"/>
</dbReference>
<dbReference type="SUPFAM" id="SSF111148">
    <property type="entry name" value="YggX-like"/>
    <property type="match status" value="1"/>
</dbReference>
<organism>
    <name type="scientific">Salmonella typhimurium (strain LT2 / SGSC1412 / ATCC 700720)</name>
    <dbReference type="NCBI Taxonomy" id="99287"/>
    <lineage>
        <taxon>Bacteria</taxon>
        <taxon>Pseudomonadati</taxon>
        <taxon>Pseudomonadota</taxon>
        <taxon>Gammaproteobacteria</taxon>
        <taxon>Enterobacterales</taxon>
        <taxon>Enterobacteriaceae</taxon>
        <taxon>Salmonella</taxon>
    </lineage>
</organism>
<accession>P67617</accession>
<accession>Q8XFV6</accession>
<proteinExistence type="evidence at protein level"/>
<evidence type="ECO:0000250" key="1"/>
<evidence type="ECO:0000269" key="2">
    <source>
    </source>
</evidence>
<evidence type="ECO:0000269" key="3">
    <source>
    </source>
</evidence>
<evidence type="ECO:0000269" key="4">
    <source>
    </source>
</evidence>
<evidence type="ECO:0000305" key="5"/>
<evidence type="ECO:0007829" key="6">
    <source>
        <dbReference type="PDB" id="1XS8"/>
    </source>
</evidence>
<reference key="1">
    <citation type="journal article" date="2001" name="Nature">
        <title>Complete genome sequence of Salmonella enterica serovar Typhimurium LT2.</title>
        <authorList>
            <person name="McClelland M."/>
            <person name="Sanderson K.E."/>
            <person name="Spieth J."/>
            <person name="Clifton S.W."/>
            <person name="Latreille P."/>
            <person name="Courtney L."/>
            <person name="Porwollik S."/>
            <person name="Ali J."/>
            <person name="Dante M."/>
            <person name="Du F."/>
            <person name="Hou S."/>
            <person name="Layman D."/>
            <person name="Leonard S."/>
            <person name="Nguyen C."/>
            <person name="Scott K."/>
            <person name="Holmes A."/>
            <person name="Grewal N."/>
            <person name="Mulvaney E."/>
            <person name="Ryan E."/>
            <person name="Sun H."/>
            <person name="Florea L."/>
            <person name="Miller W."/>
            <person name="Stoneking T."/>
            <person name="Nhan M."/>
            <person name="Waterston R."/>
            <person name="Wilson R.K."/>
        </authorList>
    </citation>
    <scope>NUCLEOTIDE SEQUENCE [LARGE SCALE GENOMIC DNA]</scope>
    <source>
        <strain>LT2 / SGSC1412 / ATCC 700720</strain>
    </source>
</reference>
<reference key="2">
    <citation type="journal article" date="2001" name="Proc. Natl. Acad. Sci. U.S.A.">
        <title>Protection from superoxide damage associated with an increased level of the YggX protein in Salmonella enterica.</title>
        <authorList>
            <person name="Gralnick J.A."/>
            <person name="Downs D.M."/>
        </authorList>
    </citation>
    <scope>FUNCTION</scope>
    <source>
        <strain>LT2</strain>
    </source>
</reference>
<reference key="3">
    <citation type="journal article" date="2003" name="J. Biol. Chem.">
        <title>The YggX protein of Salmonella enterica is involved in Fe(II) trafficking and minimizes the DNA damage caused by hydroxyl radicals: residue Cys-7 is essential for YggX function.</title>
        <authorList>
            <person name="Gralnick J.A."/>
            <person name="Downs D.M."/>
        </authorList>
    </citation>
    <scope>FUNCTION</scope>
    <scope>MUTAGENESIS OF CYS-7</scope>
    <source>
        <strain>LT2</strain>
    </source>
</reference>
<reference key="4">
    <citation type="journal article" date="2004" name="J. Bacteriol.">
        <title>Lack of YggX results in chronic oxidative stress and uncovers subtle defects in Fe-S cluster metabolism in Salmonella enterica.</title>
        <authorList>
            <person name="Skovran E."/>
            <person name="Lauhon C.T."/>
            <person name="Downs D.M."/>
        </authorList>
    </citation>
    <scope>FUNCTION</scope>
    <source>
        <strain>LT2</strain>
    </source>
</reference>
<feature type="initiator methionine" description="Removed" evidence="1">
    <location>
        <position position="1"/>
    </location>
</feature>
<feature type="chain" id="PRO_0000214505" description="Probable Fe(2+)-trafficking protein">
    <location>
        <begin position="2"/>
        <end position="91"/>
    </location>
</feature>
<feature type="mutagenesis site" description="Strong decrease in activity." evidence="3">
    <original>C</original>
    <variation>S</variation>
    <location>
        <position position="7"/>
    </location>
</feature>
<feature type="strand" evidence="6">
    <location>
        <begin position="4"/>
        <end position="6"/>
    </location>
</feature>
<feature type="turn" evidence="6">
    <location>
        <begin position="8"/>
        <end position="10"/>
    </location>
</feature>
<feature type="strand" evidence="6">
    <location>
        <begin position="11"/>
        <end position="16"/>
    </location>
</feature>
<feature type="helix" evidence="6">
    <location>
        <begin position="25"/>
        <end position="31"/>
    </location>
</feature>
<feature type="helix" evidence="6">
    <location>
        <begin position="36"/>
        <end position="53"/>
    </location>
</feature>
<feature type="helix" evidence="6">
    <location>
        <begin position="60"/>
        <end position="74"/>
    </location>
</feature>
<keyword id="KW-0002">3D-structure</keyword>
<keyword id="KW-0408">Iron</keyword>
<keyword id="KW-1185">Reference proteome</keyword>
<name>FETP_SALTY</name>
<sequence>MSRTIFCTYLQRDAEGQDFQLYPGELGKRIYNEISKDAWAQWQHKQTMLINEKKLNMMNAEHRKLLEQEMVSFLFEGKDVHIEGYTPEDKK</sequence>
<protein>
    <recommendedName>
        <fullName>Probable Fe(2+)-trafficking protein</fullName>
    </recommendedName>
</protein>
<gene>
    <name type="primary">yggX</name>
    <name type="ordered locus">STM3111</name>
</gene>